<proteinExistence type="inferred from homology"/>
<comment type="function">
    <text evidence="1">Transcriptional repressor of the nikABCDE operon. Is active in the presence of excessive concentrations of intracellular nickel.</text>
</comment>
<comment type="cofactor">
    <cofactor evidence="1">
        <name>Ni(2+)</name>
        <dbReference type="ChEBI" id="CHEBI:49786"/>
    </cofactor>
    <text evidence="1">Binds 1 nickel ion per subunit.</text>
</comment>
<comment type="subunit">
    <text evidence="1">Homotetramer.</text>
</comment>
<comment type="similarity">
    <text evidence="1">Belongs to the transcriptional regulatory CopG/NikR family.</text>
</comment>
<sequence>MQRVTITLDDDLLETLDSLSQRRGYNNRSEAIRDILRSALAQEATQQHGTQGFAVLSYVYEHEKRDLASRIVSTQHHHHDLSVATLHVHINHDDCLEIAVLKGDMGDVQHFADDVIAQRGVRHGHLQCLPKED</sequence>
<name>NIKR_ECO5E</name>
<dbReference type="EMBL" id="CP001164">
    <property type="protein sequence ID" value="ACI36650.1"/>
    <property type="molecule type" value="Genomic_DNA"/>
</dbReference>
<dbReference type="RefSeq" id="WP_001190062.1">
    <property type="nucleotide sequence ID" value="NC_011353.1"/>
</dbReference>
<dbReference type="SMR" id="B5YUQ6"/>
<dbReference type="GeneID" id="93778510"/>
<dbReference type="KEGG" id="ecf:ECH74115_4821"/>
<dbReference type="HOGENOM" id="CLU_113319_1_4_6"/>
<dbReference type="GO" id="GO:0003700">
    <property type="term" value="F:DNA-binding transcription factor activity"/>
    <property type="evidence" value="ECO:0007669"/>
    <property type="project" value="UniProtKB-UniRule"/>
</dbReference>
<dbReference type="GO" id="GO:0016151">
    <property type="term" value="F:nickel cation binding"/>
    <property type="evidence" value="ECO:0007669"/>
    <property type="project" value="UniProtKB-UniRule"/>
</dbReference>
<dbReference type="GO" id="GO:0043565">
    <property type="term" value="F:sequence-specific DNA binding"/>
    <property type="evidence" value="ECO:0007669"/>
    <property type="project" value="UniProtKB-ARBA"/>
</dbReference>
<dbReference type="GO" id="GO:0010045">
    <property type="term" value="P:response to nickel cation"/>
    <property type="evidence" value="ECO:0007669"/>
    <property type="project" value="InterPro"/>
</dbReference>
<dbReference type="CDD" id="cd22231">
    <property type="entry name" value="RHH_NikR_HicB-like"/>
    <property type="match status" value="1"/>
</dbReference>
<dbReference type="FunFam" id="1.10.1220.10:FF:000001">
    <property type="entry name" value="Nickel-responsive regulator"/>
    <property type="match status" value="1"/>
</dbReference>
<dbReference type="FunFam" id="3.30.70.1150:FF:000002">
    <property type="entry name" value="Nickel-responsive regulator"/>
    <property type="match status" value="1"/>
</dbReference>
<dbReference type="Gene3D" id="3.30.70.1150">
    <property type="entry name" value="ACT-like. Chain A, domain 2"/>
    <property type="match status" value="1"/>
</dbReference>
<dbReference type="Gene3D" id="1.10.1220.10">
    <property type="entry name" value="Met repressor-like"/>
    <property type="match status" value="1"/>
</dbReference>
<dbReference type="HAMAP" id="MF_00476">
    <property type="entry name" value="NikR"/>
    <property type="match status" value="1"/>
</dbReference>
<dbReference type="InterPro" id="IPR027271">
    <property type="entry name" value="Acetolactate_synth/TF_NikR_C"/>
</dbReference>
<dbReference type="InterPro" id="IPR045865">
    <property type="entry name" value="ACT-like_dom_sf"/>
</dbReference>
<dbReference type="InterPro" id="IPR013321">
    <property type="entry name" value="Arc_rbn_hlx_hlx"/>
</dbReference>
<dbReference type="InterPro" id="IPR002145">
    <property type="entry name" value="CopG"/>
</dbReference>
<dbReference type="InterPro" id="IPR050192">
    <property type="entry name" value="CopG/NikR_regulator"/>
</dbReference>
<dbReference type="InterPro" id="IPR022988">
    <property type="entry name" value="Ni_resp_reg_NikR"/>
</dbReference>
<dbReference type="InterPro" id="IPR014160">
    <property type="entry name" value="Nickel_NikR_proteobac"/>
</dbReference>
<dbReference type="InterPro" id="IPR010985">
    <property type="entry name" value="Ribbon_hlx_hlx"/>
</dbReference>
<dbReference type="InterPro" id="IPR014864">
    <property type="entry name" value="TF_NikR_Ni-bd_C"/>
</dbReference>
<dbReference type="NCBIfam" id="TIGR02793">
    <property type="entry name" value="nikR"/>
    <property type="match status" value="1"/>
</dbReference>
<dbReference type="NCBIfam" id="NF002815">
    <property type="entry name" value="PRK02967.1"/>
    <property type="match status" value="1"/>
</dbReference>
<dbReference type="NCBIfam" id="NF003381">
    <property type="entry name" value="PRK04460.1"/>
    <property type="match status" value="1"/>
</dbReference>
<dbReference type="PANTHER" id="PTHR34719">
    <property type="entry name" value="NICKEL-RESPONSIVE REGULATOR"/>
    <property type="match status" value="1"/>
</dbReference>
<dbReference type="PANTHER" id="PTHR34719:SF2">
    <property type="entry name" value="NICKEL-RESPONSIVE REGULATOR"/>
    <property type="match status" value="1"/>
</dbReference>
<dbReference type="Pfam" id="PF08753">
    <property type="entry name" value="NikR_C"/>
    <property type="match status" value="1"/>
</dbReference>
<dbReference type="Pfam" id="PF01402">
    <property type="entry name" value="RHH_1"/>
    <property type="match status" value="1"/>
</dbReference>
<dbReference type="SUPFAM" id="SSF55021">
    <property type="entry name" value="ACT-like"/>
    <property type="match status" value="1"/>
</dbReference>
<dbReference type="SUPFAM" id="SSF47598">
    <property type="entry name" value="Ribbon-helix-helix"/>
    <property type="match status" value="1"/>
</dbReference>
<gene>
    <name evidence="1" type="primary">nikR</name>
    <name type="ordered locus">ECH74115_4821</name>
</gene>
<reference key="1">
    <citation type="journal article" date="2011" name="Proc. Natl. Acad. Sci. U.S.A.">
        <title>Genomic anatomy of Escherichia coli O157:H7 outbreaks.</title>
        <authorList>
            <person name="Eppinger M."/>
            <person name="Mammel M.K."/>
            <person name="Leclerc J.E."/>
            <person name="Ravel J."/>
            <person name="Cebula T.A."/>
        </authorList>
    </citation>
    <scope>NUCLEOTIDE SEQUENCE [LARGE SCALE GENOMIC DNA]</scope>
    <source>
        <strain>EC4115 / EHEC</strain>
    </source>
</reference>
<feature type="chain" id="PRO_1000125817" description="Nickel-responsive regulator">
    <location>
        <begin position="1"/>
        <end position="133"/>
    </location>
</feature>
<feature type="binding site" evidence="1">
    <location>
        <position position="76"/>
    </location>
    <ligand>
        <name>Ni(2+)</name>
        <dbReference type="ChEBI" id="CHEBI:49786"/>
    </ligand>
</feature>
<feature type="binding site" evidence="1">
    <location>
        <position position="87"/>
    </location>
    <ligand>
        <name>Ni(2+)</name>
        <dbReference type="ChEBI" id="CHEBI:49786"/>
    </ligand>
</feature>
<feature type="binding site" evidence="1">
    <location>
        <position position="89"/>
    </location>
    <ligand>
        <name>Ni(2+)</name>
        <dbReference type="ChEBI" id="CHEBI:49786"/>
    </ligand>
</feature>
<feature type="binding site" evidence="1">
    <location>
        <position position="95"/>
    </location>
    <ligand>
        <name>Ni(2+)</name>
        <dbReference type="ChEBI" id="CHEBI:49786"/>
    </ligand>
</feature>
<accession>B5YUQ6</accession>
<protein>
    <recommendedName>
        <fullName evidence="1">Nickel-responsive regulator</fullName>
    </recommendedName>
</protein>
<evidence type="ECO:0000255" key="1">
    <source>
        <dbReference type="HAMAP-Rule" id="MF_00476"/>
    </source>
</evidence>
<keyword id="KW-0238">DNA-binding</keyword>
<keyword id="KW-0479">Metal-binding</keyword>
<keyword id="KW-0533">Nickel</keyword>
<keyword id="KW-0678">Repressor</keyword>
<keyword id="KW-0804">Transcription</keyword>
<keyword id="KW-0805">Transcription regulation</keyword>
<organism>
    <name type="scientific">Escherichia coli O157:H7 (strain EC4115 / EHEC)</name>
    <dbReference type="NCBI Taxonomy" id="444450"/>
    <lineage>
        <taxon>Bacteria</taxon>
        <taxon>Pseudomonadati</taxon>
        <taxon>Pseudomonadota</taxon>
        <taxon>Gammaproteobacteria</taxon>
        <taxon>Enterobacterales</taxon>
        <taxon>Enterobacteriaceae</taxon>
        <taxon>Escherichia</taxon>
    </lineage>
</organism>